<protein>
    <recommendedName>
        <fullName evidence="1">ATP synthase subunit beta</fullName>
        <ecNumber evidence="1">7.1.2.2</ecNumber>
    </recommendedName>
    <alternativeName>
        <fullName evidence="1">ATP synthase F1 sector subunit beta</fullName>
    </alternativeName>
    <alternativeName>
        <fullName evidence="1">F-ATPase subunit beta</fullName>
    </alternativeName>
</protein>
<feature type="chain" id="PRO_0000144436" description="ATP synthase subunit beta">
    <location>
        <begin position="1"/>
        <end position="502"/>
    </location>
</feature>
<feature type="binding site" evidence="1">
    <location>
        <begin position="156"/>
        <end position="163"/>
    </location>
    <ligand>
        <name>ATP</name>
        <dbReference type="ChEBI" id="CHEBI:30616"/>
    </ligand>
</feature>
<sequence>MSKVTGKVSQIIGPVIDVEFQAGVDLPKIYDSLEIKKADGSILVLEVQSHIGENTVRTISMDSSDGLSRGAEVNATGSAIQMPVGDDVYGRLFNVIGDAIDGLGNLPKSGKDGLPIHREAPKFEDLSTSTEVLFTGIKVIDLIEPYAKGGKIGLFGGAGVGKTVLIQELINNIAKGHGGLSVFAGVGERTREGNDLLREMLESGIIKYGDDFMHSMEEGGWDLSKVDKSVMKDSKATFVFGQMNEPPGARARVALSGLTIAEYFRDGAGEGQGKDVLFFVDNIFRFTQAGSEVSALLGRMPSAVGYQPTLATEMGAMQERITSTKRGSITSVQAVYVPADDLTDPAPATTFAHLDATTVLSRKIAELGIYPAVDPLDSTSRILAPEILGKDHYSCAQRVKELLQRYKELQDIIAILGMEELSEEDKMAVGRARRVQRFLSQPFHVAEQFTGLKGVLVDIKDTIKGFNMIMDGELDHLPESAFNLKGTIEEAIEAGEKMLAEA</sequence>
<reference key="1">
    <citation type="journal article" date="1988" name="J. Gen. Microbiol.">
        <title>Beta-subunit of ATP-synthase: a useful marker for studying the phylogenetic relationship of eubacteria.</title>
        <authorList>
            <person name="Amann R."/>
            <person name="Ludwig W."/>
            <person name="Schleifer K.H."/>
        </authorList>
    </citation>
    <scope>NUCLEOTIDE SEQUENCE [GENOMIC DNA]</scope>
</reference>
<keyword id="KW-0066">ATP synthesis</keyword>
<keyword id="KW-0067">ATP-binding</keyword>
<keyword id="KW-1003">Cell membrane</keyword>
<keyword id="KW-0139">CF(1)</keyword>
<keyword id="KW-0375">Hydrogen ion transport</keyword>
<keyword id="KW-0406">Ion transport</keyword>
<keyword id="KW-0472">Membrane</keyword>
<keyword id="KW-0547">Nucleotide-binding</keyword>
<keyword id="KW-1278">Translocase</keyword>
<keyword id="KW-0813">Transport</keyword>
<name>ATPB_CELLY</name>
<gene>
    <name evidence="1" type="primary">atpD</name>
</gene>
<organism>
    <name type="scientific">Cellulophaga lytica</name>
    <name type="common">Cytophaga lytica</name>
    <dbReference type="NCBI Taxonomy" id="979"/>
    <lineage>
        <taxon>Bacteria</taxon>
        <taxon>Pseudomonadati</taxon>
        <taxon>Bacteroidota</taxon>
        <taxon>Flavobacteriia</taxon>
        <taxon>Flavobacteriales</taxon>
        <taxon>Flavobacteriaceae</taxon>
        <taxon>Cellulophaga</taxon>
    </lineage>
</organism>
<proteinExistence type="inferred from homology"/>
<dbReference type="EC" id="7.1.2.2" evidence="1"/>
<dbReference type="EMBL" id="M22535">
    <property type="protein sequence ID" value="AAA23334.1"/>
    <property type="molecule type" value="Genomic_DNA"/>
</dbReference>
<dbReference type="PIR" id="B46570">
    <property type="entry name" value="B46570"/>
</dbReference>
<dbReference type="RefSeq" id="WP_013620622.1">
    <property type="nucleotide sequence ID" value="NZ_JAUOTD010000019.1"/>
</dbReference>
<dbReference type="SMR" id="P13357"/>
<dbReference type="KEGG" id="clh:IX49_05050"/>
<dbReference type="OMA" id="SMEEGGW"/>
<dbReference type="GO" id="GO:0005886">
    <property type="term" value="C:plasma membrane"/>
    <property type="evidence" value="ECO:0007669"/>
    <property type="project" value="UniProtKB-SubCell"/>
</dbReference>
<dbReference type="GO" id="GO:0045259">
    <property type="term" value="C:proton-transporting ATP synthase complex"/>
    <property type="evidence" value="ECO:0007669"/>
    <property type="project" value="UniProtKB-KW"/>
</dbReference>
<dbReference type="GO" id="GO:0005524">
    <property type="term" value="F:ATP binding"/>
    <property type="evidence" value="ECO:0007669"/>
    <property type="project" value="UniProtKB-UniRule"/>
</dbReference>
<dbReference type="GO" id="GO:0016887">
    <property type="term" value="F:ATP hydrolysis activity"/>
    <property type="evidence" value="ECO:0007669"/>
    <property type="project" value="InterPro"/>
</dbReference>
<dbReference type="GO" id="GO:0046933">
    <property type="term" value="F:proton-transporting ATP synthase activity, rotational mechanism"/>
    <property type="evidence" value="ECO:0007669"/>
    <property type="project" value="UniProtKB-UniRule"/>
</dbReference>
<dbReference type="CDD" id="cd18110">
    <property type="entry name" value="ATP-synt_F1_beta_C"/>
    <property type="match status" value="1"/>
</dbReference>
<dbReference type="CDD" id="cd18115">
    <property type="entry name" value="ATP-synt_F1_beta_N"/>
    <property type="match status" value="1"/>
</dbReference>
<dbReference type="CDD" id="cd01133">
    <property type="entry name" value="F1-ATPase_beta_CD"/>
    <property type="match status" value="1"/>
</dbReference>
<dbReference type="FunFam" id="1.10.1140.10:FF:000001">
    <property type="entry name" value="ATP synthase subunit beta"/>
    <property type="match status" value="1"/>
</dbReference>
<dbReference type="FunFam" id="3.40.50.300:FF:000004">
    <property type="entry name" value="ATP synthase subunit beta"/>
    <property type="match status" value="1"/>
</dbReference>
<dbReference type="Gene3D" id="2.40.10.170">
    <property type="match status" value="1"/>
</dbReference>
<dbReference type="Gene3D" id="1.10.1140.10">
    <property type="entry name" value="Bovine Mitochondrial F1-atpase, Atp Synthase Beta Chain, Chain D, domain 3"/>
    <property type="match status" value="1"/>
</dbReference>
<dbReference type="Gene3D" id="3.40.50.300">
    <property type="entry name" value="P-loop containing nucleotide triphosphate hydrolases"/>
    <property type="match status" value="1"/>
</dbReference>
<dbReference type="HAMAP" id="MF_01347">
    <property type="entry name" value="ATP_synth_beta_bact"/>
    <property type="match status" value="1"/>
</dbReference>
<dbReference type="InterPro" id="IPR003593">
    <property type="entry name" value="AAA+_ATPase"/>
</dbReference>
<dbReference type="InterPro" id="IPR055190">
    <property type="entry name" value="ATP-synt_VA_C"/>
</dbReference>
<dbReference type="InterPro" id="IPR005722">
    <property type="entry name" value="ATP_synth_F1_bsu"/>
</dbReference>
<dbReference type="InterPro" id="IPR020003">
    <property type="entry name" value="ATPase_a/bsu_AS"/>
</dbReference>
<dbReference type="InterPro" id="IPR050053">
    <property type="entry name" value="ATPase_alpha/beta_chains"/>
</dbReference>
<dbReference type="InterPro" id="IPR004100">
    <property type="entry name" value="ATPase_F1/V1/A1_a/bsu_N"/>
</dbReference>
<dbReference type="InterPro" id="IPR036121">
    <property type="entry name" value="ATPase_F1/V1/A1_a/bsu_N_sf"/>
</dbReference>
<dbReference type="InterPro" id="IPR000194">
    <property type="entry name" value="ATPase_F1/V1/A1_a/bsu_nucl-bd"/>
</dbReference>
<dbReference type="InterPro" id="IPR024034">
    <property type="entry name" value="ATPase_F1/V1_b/a_C"/>
</dbReference>
<dbReference type="InterPro" id="IPR027417">
    <property type="entry name" value="P-loop_NTPase"/>
</dbReference>
<dbReference type="NCBIfam" id="TIGR01039">
    <property type="entry name" value="atpD"/>
    <property type="match status" value="1"/>
</dbReference>
<dbReference type="PANTHER" id="PTHR15184">
    <property type="entry name" value="ATP SYNTHASE"/>
    <property type="match status" value="1"/>
</dbReference>
<dbReference type="PANTHER" id="PTHR15184:SF71">
    <property type="entry name" value="ATP SYNTHASE SUBUNIT BETA, MITOCHONDRIAL"/>
    <property type="match status" value="1"/>
</dbReference>
<dbReference type="Pfam" id="PF00006">
    <property type="entry name" value="ATP-synt_ab"/>
    <property type="match status" value="1"/>
</dbReference>
<dbReference type="Pfam" id="PF02874">
    <property type="entry name" value="ATP-synt_ab_N"/>
    <property type="match status" value="1"/>
</dbReference>
<dbReference type="Pfam" id="PF22919">
    <property type="entry name" value="ATP-synt_VA_C"/>
    <property type="match status" value="1"/>
</dbReference>
<dbReference type="SMART" id="SM00382">
    <property type="entry name" value="AAA"/>
    <property type="match status" value="1"/>
</dbReference>
<dbReference type="SUPFAM" id="SSF47917">
    <property type="entry name" value="C-terminal domain of alpha and beta subunits of F1 ATP synthase"/>
    <property type="match status" value="1"/>
</dbReference>
<dbReference type="SUPFAM" id="SSF50615">
    <property type="entry name" value="N-terminal domain of alpha and beta subunits of F1 ATP synthase"/>
    <property type="match status" value="1"/>
</dbReference>
<dbReference type="SUPFAM" id="SSF52540">
    <property type="entry name" value="P-loop containing nucleoside triphosphate hydrolases"/>
    <property type="match status" value="1"/>
</dbReference>
<dbReference type="PROSITE" id="PS00152">
    <property type="entry name" value="ATPASE_ALPHA_BETA"/>
    <property type="match status" value="1"/>
</dbReference>
<comment type="function">
    <text evidence="1">Produces ATP from ADP in the presence of a proton gradient across the membrane. The catalytic sites are hosted primarily by the beta subunits.</text>
</comment>
<comment type="catalytic activity">
    <reaction evidence="1">
        <text>ATP + H2O + 4 H(+)(in) = ADP + phosphate + 5 H(+)(out)</text>
        <dbReference type="Rhea" id="RHEA:57720"/>
        <dbReference type="ChEBI" id="CHEBI:15377"/>
        <dbReference type="ChEBI" id="CHEBI:15378"/>
        <dbReference type="ChEBI" id="CHEBI:30616"/>
        <dbReference type="ChEBI" id="CHEBI:43474"/>
        <dbReference type="ChEBI" id="CHEBI:456216"/>
        <dbReference type="EC" id="7.1.2.2"/>
    </reaction>
</comment>
<comment type="subunit">
    <text evidence="1">F-type ATPases have 2 components, CF(1) - the catalytic core - and CF(0) - the membrane proton channel. CF(1) has five subunits: alpha(3), beta(3), gamma(1), delta(1), epsilon(1). CF(0) has three main subunits: a(1), b(2) and c(9-12). The alpha and beta chains form an alternating ring which encloses part of the gamma chain. CF(1) is attached to CF(0) by a central stalk formed by the gamma and epsilon chains, while a peripheral stalk is formed by the delta and b chains.</text>
</comment>
<comment type="subcellular location">
    <subcellularLocation>
        <location evidence="1">Cell membrane</location>
        <topology evidence="1">Peripheral membrane protein</topology>
    </subcellularLocation>
</comment>
<comment type="similarity">
    <text evidence="1">Belongs to the ATPase alpha/beta chains family.</text>
</comment>
<evidence type="ECO:0000255" key="1">
    <source>
        <dbReference type="HAMAP-Rule" id="MF_01347"/>
    </source>
</evidence>
<accession>P13357</accession>